<comment type="function">
    <text evidence="1">The beta subunit is responsible for the synthesis of L-tryptophan from indole and L-serine.</text>
</comment>
<comment type="catalytic activity">
    <reaction>
        <text>(1S,2R)-1-C-(indol-3-yl)glycerol 3-phosphate + L-serine = D-glyceraldehyde 3-phosphate + L-tryptophan + H2O</text>
        <dbReference type="Rhea" id="RHEA:10532"/>
        <dbReference type="ChEBI" id="CHEBI:15377"/>
        <dbReference type="ChEBI" id="CHEBI:33384"/>
        <dbReference type="ChEBI" id="CHEBI:57912"/>
        <dbReference type="ChEBI" id="CHEBI:58866"/>
        <dbReference type="ChEBI" id="CHEBI:59776"/>
        <dbReference type="EC" id="4.2.1.20"/>
    </reaction>
</comment>
<comment type="cofactor">
    <cofactor evidence="1">
        <name>pyridoxal 5'-phosphate</name>
        <dbReference type="ChEBI" id="CHEBI:597326"/>
    </cofactor>
</comment>
<comment type="pathway">
    <text>Amino-acid biosynthesis; L-tryptophan biosynthesis; L-tryptophan from chorismate: step 5/5.</text>
</comment>
<comment type="subunit">
    <text evidence="1">Tetramer of two alpha and two beta chains.</text>
</comment>
<comment type="similarity">
    <text evidence="2">Belongs to the TrpB family.</text>
</comment>
<reference key="1">
    <citation type="journal article" date="1995" name="Science">
        <title>Whole-genome random sequencing and assembly of Haemophilus influenzae Rd.</title>
        <authorList>
            <person name="Fleischmann R.D."/>
            <person name="Adams M.D."/>
            <person name="White O."/>
            <person name="Clayton R.A."/>
            <person name="Kirkness E.F."/>
            <person name="Kerlavage A.R."/>
            <person name="Bult C.J."/>
            <person name="Tomb J.-F."/>
            <person name="Dougherty B.A."/>
            <person name="Merrick J.M."/>
            <person name="McKenney K."/>
            <person name="Sutton G.G."/>
            <person name="FitzHugh W."/>
            <person name="Fields C.A."/>
            <person name="Gocayne J.D."/>
            <person name="Scott J.D."/>
            <person name="Shirley R."/>
            <person name="Liu L.-I."/>
            <person name="Glodek A."/>
            <person name="Kelley J.M."/>
            <person name="Weidman J.F."/>
            <person name="Phillips C.A."/>
            <person name="Spriggs T."/>
            <person name="Hedblom E."/>
            <person name="Cotton M.D."/>
            <person name="Utterback T.R."/>
            <person name="Hanna M.C."/>
            <person name="Nguyen D.T."/>
            <person name="Saudek D.M."/>
            <person name="Brandon R.C."/>
            <person name="Fine L.D."/>
            <person name="Fritchman J.L."/>
            <person name="Fuhrmann J.L."/>
            <person name="Geoghagen N.S.M."/>
            <person name="Gnehm C.L."/>
            <person name="McDonald L.A."/>
            <person name="Small K.V."/>
            <person name="Fraser C.M."/>
            <person name="Smith H.O."/>
            <person name="Venter J.C."/>
        </authorList>
    </citation>
    <scope>NUCLEOTIDE SEQUENCE [LARGE SCALE GENOMIC DNA]</scope>
    <source>
        <strain>ATCC 51907 / DSM 11121 / KW20 / Rd</strain>
    </source>
</reference>
<gene>
    <name type="primary">trpB</name>
    <name type="ordered locus">HI_1431</name>
</gene>
<accession>P43760</accession>
<organism>
    <name type="scientific">Haemophilus influenzae (strain ATCC 51907 / DSM 11121 / KW20 / Rd)</name>
    <dbReference type="NCBI Taxonomy" id="71421"/>
    <lineage>
        <taxon>Bacteria</taxon>
        <taxon>Pseudomonadati</taxon>
        <taxon>Pseudomonadota</taxon>
        <taxon>Gammaproteobacteria</taxon>
        <taxon>Pasteurellales</taxon>
        <taxon>Pasteurellaceae</taxon>
        <taxon>Haemophilus</taxon>
    </lineage>
</organism>
<sequence>MSDTLLNPYFGEFGGMYVPEILVPVLKQLEQAFVEAQNDPTFQAEFADLLKNYAGRPTALTLCRNLTKGTKTKLYLKREDLLHGGAHKTNQVLGQILLAKRMGKTRIIAETGAGQHGVATALACAMLDMPCRVYMGAKDVERQSPNVFRMRLMGAEVIPVQKGSCSLKDACCEAMRDWSANYETTHYLLGTAAGPHPFPTIVREFQKMIGEETKRQILEREGRLPDTVIAAVGGGSNAIGMFADFIDESNVRLIGVEPAGKGIETGEHGAPLKHGTTGIYFGMKSPIMQDKDGQIEESYSISAGLDFPSVGPQHAYLNEIGRADYVSITDEEALNAFQELAKHEGIIPALESSHALAYALKLIKQNPEKEQLLVVNLSGRGDKDIFTVDKILNGGAN</sequence>
<name>TRPB_HAEIN</name>
<dbReference type="EC" id="4.2.1.20"/>
<dbReference type="EMBL" id="L42023">
    <property type="protein sequence ID" value="AAC23078.1"/>
    <property type="molecule type" value="Genomic_DNA"/>
</dbReference>
<dbReference type="PIR" id="I64122">
    <property type="entry name" value="I64122"/>
</dbReference>
<dbReference type="RefSeq" id="NP_439580.1">
    <property type="nucleotide sequence ID" value="NC_000907.1"/>
</dbReference>
<dbReference type="SMR" id="P43760"/>
<dbReference type="STRING" id="71421.HI_1431"/>
<dbReference type="EnsemblBacteria" id="AAC23078">
    <property type="protein sequence ID" value="AAC23078"/>
    <property type="gene ID" value="HI_1431"/>
</dbReference>
<dbReference type="KEGG" id="hin:HI_1431"/>
<dbReference type="PATRIC" id="fig|71421.8.peg.1488"/>
<dbReference type="eggNOG" id="COG0133">
    <property type="taxonomic scope" value="Bacteria"/>
</dbReference>
<dbReference type="HOGENOM" id="CLU_016734_3_1_6"/>
<dbReference type="OrthoDB" id="9766131at2"/>
<dbReference type="PhylomeDB" id="P43760"/>
<dbReference type="BioCyc" id="HINF71421:G1GJ1-1454-MONOMER"/>
<dbReference type="UniPathway" id="UPA00035">
    <property type="reaction ID" value="UER00044"/>
</dbReference>
<dbReference type="Proteomes" id="UP000000579">
    <property type="component" value="Chromosome"/>
</dbReference>
<dbReference type="GO" id="GO:0005737">
    <property type="term" value="C:cytoplasm"/>
    <property type="evidence" value="ECO:0000318"/>
    <property type="project" value="GO_Central"/>
</dbReference>
<dbReference type="GO" id="GO:0004834">
    <property type="term" value="F:tryptophan synthase activity"/>
    <property type="evidence" value="ECO:0007669"/>
    <property type="project" value="UniProtKB-UniRule"/>
</dbReference>
<dbReference type="GO" id="GO:0000162">
    <property type="term" value="P:L-tryptophan biosynthetic process"/>
    <property type="evidence" value="ECO:0000318"/>
    <property type="project" value="GO_Central"/>
</dbReference>
<dbReference type="CDD" id="cd06446">
    <property type="entry name" value="Trp-synth_B"/>
    <property type="match status" value="1"/>
</dbReference>
<dbReference type="FunFam" id="3.40.50.1100:FF:000001">
    <property type="entry name" value="Tryptophan synthase beta chain"/>
    <property type="match status" value="1"/>
</dbReference>
<dbReference type="FunFam" id="3.40.50.1100:FF:000004">
    <property type="entry name" value="Tryptophan synthase beta chain"/>
    <property type="match status" value="1"/>
</dbReference>
<dbReference type="Gene3D" id="3.40.50.1100">
    <property type="match status" value="2"/>
</dbReference>
<dbReference type="HAMAP" id="MF_00133">
    <property type="entry name" value="Trp_synth_beta"/>
    <property type="match status" value="1"/>
</dbReference>
<dbReference type="InterPro" id="IPR006653">
    <property type="entry name" value="Trp_synth_b_CS"/>
</dbReference>
<dbReference type="InterPro" id="IPR006654">
    <property type="entry name" value="Trp_synth_beta"/>
</dbReference>
<dbReference type="InterPro" id="IPR023026">
    <property type="entry name" value="Trp_synth_beta/beta-like"/>
</dbReference>
<dbReference type="InterPro" id="IPR001926">
    <property type="entry name" value="TrpB-like_PALP"/>
</dbReference>
<dbReference type="InterPro" id="IPR036052">
    <property type="entry name" value="TrpB-like_PALP_sf"/>
</dbReference>
<dbReference type="NCBIfam" id="TIGR00263">
    <property type="entry name" value="trpB"/>
    <property type="match status" value="1"/>
</dbReference>
<dbReference type="PANTHER" id="PTHR48077:SF3">
    <property type="entry name" value="TRYPTOPHAN SYNTHASE"/>
    <property type="match status" value="1"/>
</dbReference>
<dbReference type="PANTHER" id="PTHR48077">
    <property type="entry name" value="TRYPTOPHAN SYNTHASE-RELATED"/>
    <property type="match status" value="1"/>
</dbReference>
<dbReference type="Pfam" id="PF00291">
    <property type="entry name" value="PALP"/>
    <property type="match status" value="1"/>
</dbReference>
<dbReference type="PIRSF" id="PIRSF001413">
    <property type="entry name" value="Trp_syn_beta"/>
    <property type="match status" value="1"/>
</dbReference>
<dbReference type="SUPFAM" id="SSF53686">
    <property type="entry name" value="Tryptophan synthase beta subunit-like PLP-dependent enzymes"/>
    <property type="match status" value="1"/>
</dbReference>
<dbReference type="PROSITE" id="PS00168">
    <property type="entry name" value="TRP_SYNTHASE_BETA"/>
    <property type="match status" value="1"/>
</dbReference>
<evidence type="ECO:0000250" key="1"/>
<evidence type="ECO:0000305" key="2"/>
<proteinExistence type="inferred from homology"/>
<keyword id="KW-0028">Amino-acid biosynthesis</keyword>
<keyword id="KW-0057">Aromatic amino acid biosynthesis</keyword>
<keyword id="KW-0456">Lyase</keyword>
<keyword id="KW-0663">Pyridoxal phosphate</keyword>
<keyword id="KW-1185">Reference proteome</keyword>
<keyword id="KW-0822">Tryptophan biosynthesis</keyword>
<protein>
    <recommendedName>
        <fullName>Tryptophan synthase beta chain</fullName>
        <ecNumber>4.2.1.20</ecNumber>
    </recommendedName>
</protein>
<feature type="chain" id="PRO_0000098953" description="Tryptophan synthase beta chain">
    <location>
        <begin position="1"/>
        <end position="397"/>
    </location>
</feature>
<feature type="modified residue" description="N6-(pyridoxal phosphate)lysine" evidence="1">
    <location>
        <position position="88"/>
    </location>
</feature>